<accession>Q31673</accession>
<keyword id="KW-0934">Plastid</keyword>
<dbReference type="EMBL" id="X82630">
    <property type="protein sequence ID" value="CAA57951.1"/>
    <property type="molecule type" value="Genomic_DNA"/>
</dbReference>
<dbReference type="EMBL" id="AJ294725">
    <property type="protein sequence ID" value="CAC24585.1"/>
    <property type="molecule type" value="Genomic_DNA"/>
</dbReference>
<dbReference type="RefSeq" id="NP_074974.1">
    <property type="nucleotide sequence ID" value="NC_002652.1"/>
</dbReference>
<dbReference type="GeneID" id="1457307"/>
<dbReference type="GO" id="GO:0009536">
    <property type="term" value="C:plastid"/>
    <property type="evidence" value="ECO:0007669"/>
    <property type="project" value="UniProtKB-SubCell"/>
</dbReference>
<sequence length="125" mass="15575">MINFGMDIQILLSIIHKFYKIIFTPVNLSLFFCFLVLYMIYSYVKDKKSKRYFDYRVNLYIVIGFWTRFGIRFGIRFLIFILKYIFYFIFDILCYIYWFIFSIFLSLIFNIFIYVKIILLYIVFN</sequence>
<proteinExistence type="predicted"/>
<organism>
    <name type="scientific">Euglena longa</name>
    <name type="common">Euglenophycean alga</name>
    <name type="synonym">Astasia longa</name>
    <dbReference type="NCBI Taxonomy" id="3037"/>
    <lineage>
        <taxon>Eukaryota</taxon>
        <taxon>Discoba</taxon>
        <taxon>Euglenozoa</taxon>
        <taxon>Euglenida</taxon>
        <taxon>Spirocuta</taxon>
        <taxon>Euglenophyceae</taxon>
        <taxon>Euglenales</taxon>
        <taxon>Euglenaceae</taxon>
        <taxon>Euglena</taxon>
    </lineage>
</organism>
<reference key="1">
    <citation type="submission" date="1994-11" db="EMBL/GenBank/DDBJ databases">
        <title>The ribosomal protein gene rps12 from the plastid genome of the nonphotosynthetic flagellate Astasia longa.</title>
        <authorList>
            <person name="Knauf U."/>
            <person name="Hachtel W."/>
        </authorList>
    </citation>
    <scope>NUCLEOTIDE SEQUENCE [GENOMIC DNA]</scope>
    <source>
        <strain>CCAP 1204-17a</strain>
    </source>
</reference>
<reference key="2">
    <citation type="journal article" date="2000" name="Protist">
        <title>Complete gene map of the plastid genome of the nonphotosynthetic euglenoid flagellate Astasia longa.</title>
        <authorList>
            <person name="Gockel G."/>
            <person name="Hachtel W."/>
        </authorList>
    </citation>
    <scope>NUCLEOTIDE SEQUENCE [LARGE SCALE GENOMIC DNA]</scope>
    <source>
        <strain>CCAP 1204-17a</strain>
    </source>
</reference>
<name>YCX2_EUGLO</name>
<feature type="chain" id="PRO_0000217486" description="Uncharacterized 15.6 kDa protein in rps12-trnP intergenic region">
    <location>
        <begin position="1"/>
        <end position="125"/>
    </location>
</feature>
<geneLocation type="non-photosynthetic plastid"/>
<comment type="subcellular location">
    <subcellularLocation>
        <location>Plastid</location>
    </subcellularLocation>
</comment>
<protein>
    <recommendedName>
        <fullName>Uncharacterized 15.6 kDa protein in rps12-trnP intergenic region</fullName>
    </recommendedName>
    <alternativeName>
        <fullName>ORF125a</fullName>
    </alternativeName>
</protein>